<dbReference type="EC" id="6.1.1.21" evidence="1"/>
<dbReference type="EMBL" id="CP000606">
    <property type="protein sequence ID" value="ABO23161.1"/>
    <property type="molecule type" value="Genomic_DNA"/>
</dbReference>
<dbReference type="RefSeq" id="WP_011865093.1">
    <property type="nucleotide sequence ID" value="NC_009092.1"/>
</dbReference>
<dbReference type="SMR" id="A3QCG3"/>
<dbReference type="STRING" id="323850.Shew_1291"/>
<dbReference type="KEGG" id="slo:Shew_1291"/>
<dbReference type="eggNOG" id="COG0124">
    <property type="taxonomic scope" value="Bacteria"/>
</dbReference>
<dbReference type="HOGENOM" id="CLU_025113_1_1_6"/>
<dbReference type="OrthoDB" id="9800814at2"/>
<dbReference type="Proteomes" id="UP000001558">
    <property type="component" value="Chromosome"/>
</dbReference>
<dbReference type="GO" id="GO:0005737">
    <property type="term" value="C:cytoplasm"/>
    <property type="evidence" value="ECO:0007669"/>
    <property type="project" value="UniProtKB-SubCell"/>
</dbReference>
<dbReference type="GO" id="GO:0005524">
    <property type="term" value="F:ATP binding"/>
    <property type="evidence" value="ECO:0007669"/>
    <property type="project" value="UniProtKB-UniRule"/>
</dbReference>
<dbReference type="GO" id="GO:0004821">
    <property type="term" value="F:histidine-tRNA ligase activity"/>
    <property type="evidence" value="ECO:0007669"/>
    <property type="project" value="UniProtKB-UniRule"/>
</dbReference>
<dbReference type="GO" id="GO:0006427">
    <property type="term" value="P:histidyl-tRNA aminoacylation"/>
    <property type="evidence" value="ECO:0007669"/>
    <property type="project" value="UniProtKB-UniRule"/>
</dbReference>
<dbReference type="CDD" id="cd00773">
    <property type="entry name" value="HisRS-like_core"/>
    <property type="match status" value="1"/>
</dbReference>
<dbReference type="CDD" id="cd00859">
    <property type="entry name" value="HisRS_anticodon"/>
    <property type="match status" value="1"/>
</dbReference>
<dbReference type="FunFam" id="3.30.930.10:FF:000005">
    <property type="entry name" value="Histidine--tRNA ligase"/>
    <property type="match status" value="1"/>
</dbReference>
<dbReference type="Gene3D" id="3.40.50.800">
    <property type="entry name" value="Anticodon-binding domain"/>
    <property type="match status" value="1"/>
</dbReference>
<dbReference type="Gene3D" id="3.30.930.10">
    <property type="entry name" value="Bira Bifunctional Protein, Domain 2"/>
    <property type="match status" value="1"/>
</dbReference>
<dbReference type="HAMAP" id="MF_00127">
    <property type="entry name" value="His_tRNA_synth"/>
    <property type="match status" value="1"/>
</dbReference>
<dbReference type="InterPro" id="IPR006195">
    <property type="entry name" value="aa-tRNA-synth_II"/>
</dbReference>
<dbReference type="InterPro" id="IPR045864">
    <property type="entry name" value="aa-tRNA-synth_II/BPL/LPL"/>
</dbReference>
<dbReference type="InterPro" id="IPR004154">
    <property type="entry name" value="Anticodon-bd"/>
</dbReference>
<dbReference type="InterPro" id="IPR036621">
    <property type="entry name" value="Anticodon-bd_dom_sf"/>
</dbReference>
<dbReference type="InterPro" id="IPR015807">
    <property type="entry name" value="His-tRNA-ligase"/>
</dbReference>
<dbReference type="InterPro" id="IPR041715">
    <property type="entry name" value="HisRS-like_core"/>
</dbReference>
<dbReference type="InterPro" id="IPR004516">
    <property type="entry name" value="HisRS/HisZ"/>
</dbReference>
<dbReference type="InterPro" id="IPR033656">
    <property type="entry name" value="HisRS_anticodon"/>
</dbReference>
<dbReference type="NCBIfam" id="TIGR00442">
    <property type="entry name" value="hisS"/>
    <property type="match status" value="1"/>
</dbReference>
<dbReference type="PANTHER" id="PTHR43707:SF1">
    <property type="entry name" value="HISTIDINE--TRNA LIGASE, MITOCHONDRIAL-RELATED"/>
    <property type="match status" value="1"/>
</dbReference>
<dbReference type="PANTHER" id="PTHR43707">
    <property type="entry name" value="HISTIDYL-TRNA SYNTHETASE"/>
    <property type="match status" value="1"/>
</dbReference>
<dbReference type="Pfam" id="PF03129">
    <property type="entry name" value="HGTP_anticodon"/>
    <property type="match status" value="1"/>
</dbReference>
<dbReference type="Pfam" id="PF13393">
    <property type="entry name" value="tRNA-synt_His"/>
    <property type="match status" value="1"/>
</dbReference>
<dbReference type="PIRSF" id="PIRSF001549">
    <property type="entry name" value="His-tRNA_synth"/>
    <property type="match status" value="1"/>
</dbReference>
<dbReference type="SUPFAM" id="SSF52954">
    <property type="entry name" value="Class II aaRS ABD-related"/>
    <property type="match status" value="1"/>
</dbReference>
<dbReference type="SUPFAM" id="SSF55681">
    <property type="entry name" value="Class II aaRS and biotin synthetases"/>
    <property type="match status" value="1"/>
</dbReference>
<dbReference type="PROSITE" id="PS50862">
    <property type="entry name" value="AA_TRNA_LIGASE_II"/>
    <property type="match status" value="1"/>
</dbReference>
<sequence length="423" mass="47265">MAKQIQAIRGMNDILPTQSPLWQKLEAVLRDTVAAYGYSEIRTPIVESTDLFKRSIGEVTDIVEKEMYTFADRNGDLLTLRPEGTASTVRAGNEHGLLYNQEQRLWYMGPMFRHERPQKGRYRQFNQFGVEVYGIASADIDAEVLMMSHRLWQKLGISEHVKLELNTLGDAQERAAYRDALVEFLEQHEEKLDEDSQRRMYSNPLRVLDSKNPDVQALLGDAPALMDYLGEESRGHFAHLCELLEAVGIQYEINPRLVRGLDYYNRTVFEWVTDSLGAQGTVLAGGRYDGLVGQLGGKDTPAVGFAMGLERIVLMLETLALTDDVSGPVDVYVTAMGDDCRVAAIKVAQQLREVDGLKVMSHCGGGNFKKQMKRADKSGAKLAIVIGETELANGQVALKYLREEKEQELVAQDSLAAYVAELI</sequence>
<keyword id="KW-0030">Aminoacyl-tRNA synthetase</keyword>
<keyword id="KW-0067">ATP-binding</keyword>
<keyword id="KW-0963">Cytoplasm</keyword>
<keyword id="KW-0436">Ligase</keyword>
<keyword id="KW-0547">Nucleotide-binding</keyword>
<keyword id="KW-0648">Protein biosynthesis</keyword>
<keyword id="KW-1185">Reference proteome</keyword>
<feature type="chain" id="PRO_1000016447" description="Histidine--tRNA ligase">
    <location>
        <begin position="1"/>
        <end position="423"/>
    </location>
</feature>
<protein>
    <recommendedName>
        <fullName evidence="1">Histidine--tRNA ligase</fullName>
        <ecNumber evidence="1">6.1.1.21</ecNumber>
    </recommendedName>
    <alternativeName>
        <fullName evidence="1">Histidyl-tRNA synthetase</fullName>
        <shortName evidence="1">HisRS</shortName>
    </alternativeName>
</protein>
<organism>
    <name type="scientific">Shewanella loihica (strain ATCC BAA-1088 / PV-4)</name>
    <dbReference type="NCBI Taxonomy" id="323850"/>
    <lineage>
        <taxon>Bacteria</taxon>
        <taxon>Pseudomonadati</taxon>
        <taxon>Pseudomonadota</taxon>
        <taxon>Gammaproteobacteria</taxon>
        <taxon>Alteromonadales</taxon>
        <taxon>Shewanellaceae</taxon>
        <taxon>Shewanella</taxon>
    </lineage>
</organism>
<reference key="1">
    <citation type="submission" date="2007-03" db="EMBL/GenBank/DDBJ databases">
        <title>Complete sequence of Shewanella loihica PV-4.</title>
        <authorList>
            <consortium name="US DOE Joint Genome Institute"/>
            <person name="Copeland A."/>
            <person name="Lucas S."/>
            <person name="Lapidus A."/>
            <person name="Barry K."/>
            <person name="Detter J.C."/>
            <person name="Glavina del Rio T."/>
            <person name="Hammon N."/>
            <person name="Israni S."/>
            <person name="Dalin E."/>
            <person name="Tice H."/>
            <person name="Pitluck S."/>
            <person name="Chain P."/>
            <person name="Malfatti S."/>
            <person name="Shin M."/>
            <person name="Vergez L."/>
            <person name="Schmutz J."/>
            <person name="Larimer F."/>
            <person name="Land M."/>
            <person name="Hauser L."/>
            <person name="Kyrpides N."/>
            <person name="Mikhailova N."/>
            <person name="Romine M.F."/>
            <person name="Serres G."/>
            <person name="Fredrickson J."/>
            <person name="Tiedje J."/>
            <person name="Richardson P."/>
        </authorList>
    </citation>
    <scope>NUCLEOTIDE SEQUENCE [LARGE SCALE GENOMIC DNA]</scope>
    <source>
        <strain>ATCC BAA-1088 / PV-4</strain>
    </source>
</reference>
<evidence type="ECO:0000255" key="1">
    <source>
        <dbReference type="HAMAP-Rule" id="MF_00127"/>
    </source>
</evidence>
<proteinExistence type="inferred from homology"/>
<accession>A3QCG3</accession>
<comment type="catalytic activity">
    <reaction evidence="1">
        <text>tRNA(His) + L-histidine + ATP = L-histidyl-tRNA(His) + AMP + diphosphate + H(+)</text>
        <dbReference type="Rhea" id="RHEA:17313"/>
        <dbReference type="Rhea" id="RHEA-COMP:9665"/>
        <dbReference type="Rhea" id="RHEA-COMP:9689"/>
        <dbReference type="ChEBI" id="CHEBI:15378"/>
        <dbReference type="ChEBI" id="CHEBI:30616"/>
        <dbReference type="ChEBI" id="CHEBI:33019"/>
        <dbReference type="ChEBI" id="CHEBI:57595"/>
        <dbReference type="ChEBI" id="CHEBI:78442"/>
        <dbReference type="ChEBI" id="CHEBI:78527"/>
        <dbReference type="ChEBI" id="CHEBI:456215"/>
        <dbReference type="EC" id="6.1.1.21"/>
    </reaction>
</comment>
<comment type="subunit">
    <text evidence="1">Homodimer.</text>
</comment>
<comment type="subcellular location">
    <subcellularLocation>
        <location evidence="1">Cytoplasm</location>
    </subcellularLocation>
</comment>
<comment type="similarity">
    <text evidence="1">Belongs to the class-II aminoacyl-tRNA synthetase family.</text>
</comment>
<name>SYH_SHELP</name>
<gene>
    <name evidence="1" type="primary">hisS</name>
    <name type="ordered locus">Shew_1291</name>
</gene>